<reference key="1">
    <citation type="submission" date="2008-02" db="EMBL/GenBank/DDBJ databases">
        <title>Complete sequence of Escherichia coli C str. ATCC 8739.</title>
        <authorList>
            <person name="Copeland A."/>
            <person name="Lucas S."/>
            <person name="Lapidus A."/>
            <person name="Glavina del Rio T."/>
            <person name="Dalin E."/>
            <person name="Tice H."/>
            <person name="Bruce D."/>
            <person name="Goodwin L."/>
            <person name="Pitluck S."/>
            <person name="Kiss H."/>
            <person name="Brettin T."/>
            <person name="Detter J.C."/>
            <person name="Han C."/>
            <person name="Kuske C.R."/>
            <person name="Schmutz J."/>
            <person name="Larimer F."/>
            <person name="Land M."/>
            <person name="Hauser L."/>
            <person name="Kyrpides N."/>
            <person name="Mikhailova N."/>
            <person name="Ingram L."/>
            <person name="Richardson P."/>
        </authorList>
    </citation>
    <scope>NUCLEOTIDE SEQUENCE [LARGE SCALE GENOMIC DNA]</scope>
    <source>
        <strain>ATCC 8739 / DSM 1576 / NBRC 3972 / NCIMB 8545 / WDCM 00012 / Crooks</strain>
    </source>
</reference>
<gene>
    <name evidence="1" type="primary">flhD</name>
    <name type="ordered locus">EcolC_1740</name>
</gene>
<name>FLHD_ECOLC</name>
<feature type="chain" id="PRO_1000083316" description="Flagellar transcriptional regulator FlhD">
    <location>
        <begin position="1"/>
        <end position="116"/>
    </location>
</feature>
<feature type="disulfide bond" description="Interchain" evidence="1">
    <location>
        <position position="65"/>
    </location>
</feature>
<organism>
    <name type="scientific">Escherichia coli (strain ATCC 8739 / DSM 1576 / NBRC 3972 / NCIMB 8545 / WDCM 00012 / Crooks)</name>
    <dbReference type="NCBI Taxonomy" id="481805"/>
    <lineage>
        <taxon>Bacteria</taxon>
        <taxon>Pseudomonadati</taxon>
        <taxon>Pseudomonadota</taxon>
        <taxon>Gammaproteobacteria</taxon>
        <taxon>Enterobacterales</taxon>
        <taxon>Enterobacteriaceae</taxon>
        <taxon>Escherichia</taxon>
    </lineage>
</organism>
<keyword id="KW-0010">Activator</keyword>
<keyword id="KW-1005">Bacterial flagellum biogenesis</keyword>
<keyword id="KW-0963">Cytoplasm</keyword>
<keyword id="KW-1015">Disulfide bond</keyword>
<keyword id="KW-0238">DNA-binding</keyword>
<keyword id="KW-0804">Transcription</keyword>
<keyword id="KW-0805">Transcription regulation</keyword>
<sequence length="116" mass="13316">MHTSELLKHIYDINLSYLLLAQRLIVQDKASAMFRLGINEEMATTLAALTLPQMVKLAETNQLVCHFRFDSHQTITQLTQDSRVDDLQQIHTGIMLSTRLLNDVNQPEEALRKKRA</sequence>
<proteinExistence type="inferred from homology"/>
<accession>B1J0J6</accession>
<comment type="function">
    <text evidence="1">Functions in complex with FlhC as a master transcriptional regulator that regulates transcription of several flagellar and non-flagellar operons by binding to their promoter region. Activates expression of class 2 flagellar genes, including fliA, which is a flagellum-specific sigma factor that turns on the class 3 genes. Also regulates genes whose products function in a variety of physiological pathways.</text>
</comment>
<comment type="subunit">
    <text evidence="1">Homodimer; disulfide-linked. Forms a heterohexamer composed of two FlhC and four FlhD subunits. Each FlhC binds a FlhD dimer, forming a heterotrimer, and a hexamer assembles by dimerization of two heterotrimers.</text>
</comment>
<comment type="subcellular location">
    <subcellularLocation>
        <location evidence="1">Cytoplasm</location>
    </subcellularLocation>
</comment>
<comment type="domain">
    <text evidence="1">The C-terminal region contains a putative helix-turn-helix (HTH) motif, suggesting that this region may bind DNA.</text>
</comment>
<comment type="similarity">
    <text evidence="1">Belongs to the FlhD family.</text>
</comment>
<dbReference type="EMBL" id="CP000946">
    <property type="protein sequence ID" value="ACA77390.1"/>
    <property type="molecule type" value="Genomic_DNA"/>
</dbReference>
<dbReference type="RefSeq" id="WP_001295647.1">
    <property type="nucleotide sequence ID" value="NZ_MTFT01000011.1"/>
</dbReference>
<dbReference type="SMR" id="B1J0J6"/>
<dbReference type="GeneID" id="93776197"/>
<dbReference type="KEGG" id="ecl:EcolC_1740"/>
<dbReference type="HOGENOM" id="CLU_144160_0_0_6"/>
<dbReference type="GO" id="GO:0005737">
    <property type="term" value="C:cytoplasm"/>
    <property type="evidence" value="ECO:0007669"/>
    <property type="project" value="UniProtKB-SubCell"/>
</dbReference>
<dbReference type="GO" id="GO:0003677">
    <property type="term" value="F:DNA binding"/>
    <property type="evidence" value="ECO:0007669"/>
    <property type="project" value="UniProtKB-UniRule"/>
</dbReference>
<dbReference type="GO" id="GO:0044780">
    <property type="term" value="P:bacterial-type flagellum assembly"/>
    <property type="evidence" value="ECO:0007669"/>
    <property type="project" value="InterPro"/>
</dbReference>
<dbReference type="GO" id="GO:0045893">
    <property type="term" value="P:positive regulation of DNA-templated transcription"/>
    <property type="evidence" value="ECO:0007669"/>
    <property type="project" value="InterPro"/>
</dbReference>
<dbReference type="GO" id="GO:1902208">
    <property type="term" value="P:regulation of bacterial-type flagellum assembly"/>
    <property type="evidence" value="ECO:0007669"/>
    <property type="project" value="UniProtKB-UniRule"/>
</dbReference>
<dbReference type="FunFam" id="1.10.4000.10:FF:000001">
    <property type="entry name" value="Flagellar transcriptional regulator FlhD"/>
    <property type="match status" value="1"/>
</dbReference>
<dbReference type="Gene3D" id="1.10.4000.10">
    <property type="entry name" value="Flagellar transcriptional activator FlhD"/>
    <property type="match status" value="1"/>
</dbReference>
<dbReference type="HAMAP" id="MF_00725">
    <property type="entry name" value="FlhD"/>
    <property type="match status" value="1"/>
</dbReference>
<dbReference type="InterPro" id="IPR023559">
    <property type="entry name" value="Flagellar_FlhD"/>
</dbReference>
<dbReference type="InterPro" id="IPR036194">
    <property type="entry name" value="FlhD_sf"/>
</dbReference>
<dbReference type="NCBIfam" id="NF002783">
    <property type="entry name" value="PRK02909.1-1"/>
    <property type="match status" value="1"/>
</dbReference>
<dbReference type="Pfam" id="PF05247">
    <property type="entry name" value="FlhD"/>
    <property type="match status" value="1"/>
</dbReference>
<dbReference type="SUPFAM" id="SSF63592">
    <property type="entry name" value="Flagellar transcriptional activator FlhD"/>
    <property type="match status" value="1"/>
</dbReference>
<protein>
    <recommendedName>
        <fullName evidence="1">Flagellar transcriptional regulator FlhD</fullName>
    </recommendedName>
</protein>
<evidence type="ECO:0000255" key="1">
    <source>
        <dbReference type="HAMAP-Rule" id="MF_00725"/>
    </source>
</evidence>